<organism>
    <name type="scientific">Mycobacterium avium (strain 104)</name>
    <dbReference type="NCBI Taxonomy" id="243243"/>
    <lineage>
        <taxon>Bacteria</taxon>
        <taxon>Bacillati</taxon>
        <taxon>Actinomycetota</taxon>
        <taxon>Actinomycetes</taxon>
        <taxon>Mycobacteriales</taxon>
        <taxon>Mycobacteriaceae</taxon>
        <taxon>Mycobacterium</taxon>
        <taxon>Mycobacterium avium complex (MAC)</taxon>
    </lineage>
</organism>
<comment type="function">
    <text evidence="1">Catalyzes the anti-1,4-elimination of the C-3 phosphate and the C-6 proR hydrogen from 5-enolpyruvylshikimate-3-phosphate (EPSP) to yield chorismate, which is the branch point compound that serves as the starting substrate for the three terminal pathways of aromatic amino acid biosynthesis. This reaction introduces a second double bond into the aromatic ring system.</text>
</comment>
<comment type="catalytic activity">
    <reaction evidence="1">
        <text>5-O-(1-carboxyvinyl)-3-phosphoshikimate = chorismate + phosphate</text>
        <dbReference type="Rhea" id="RHEA:21020"/>
        <dbReference type="ChEBI" id="CHEBI:29748"/>
        <dbReference type="ChEBI" id="CHEBI:43474"/>
        <dbReference type="ChEBI" id="CHEBI:57701"/>
        <dbReference type="EC" id="4.2.3.5"/>
    </reaction>
</comment>
<comment type="cofactor">
    <cofactor evidence="1">
        <name>FMNH2</name>
        <dbReference type="ChEBI" id="CHEBI:57618"/>
    </cofactor>
    <text evidence="1">Reduced FMN (FMNH(2)).</text>
</comment>
<comment type="pathway">
    <text evidence="1">Metabolic intermediate biosynthesis; chorismate biosynthesis; chorismate from D-erythrose 4-phosphate and phosphoenolpyruvate: step 7/7.</text>
</comment>
<comment type="subunit">
    <text evidence="1">Homotetramer.</text>
</comment>
<comment type="similarity">
    <text evidence="1">Belongs to the chorismate synthase family.</text>
</comment>
<gene>
    <name evidence="1" type="primary">aroC</name>
    <name type="ordered locus">MAV_3417</name>
</gene>
<name>AROC_MYCA1</name>
<accession>A0QI61</accession>
<keyword id="KW-0028">Amino-acid biosynthesis</keyword>
<keyword id="KW-0057">Aromatic amino acid biosynthesis</keyword>
<keyword id="KW-0274">FAD</keyword>
<keyword id="KW-0285">Flavoprotein</keyword>
<keyword id="KW-0288">FMN</keyword>
<keyword id="KW-0456">Lyase</keyword>
<keyword id="KW-0521">NADP</keyword>
<proteinExistence type="inferred from homology"/>
<sequence>MLRWITAGESHGRALVAVLEGMVAGVEITSTDISEQLARRRLGYGRGARMSFERDAVSVLSGVRHGLTLGGPIAVEIGNTEWPKWETVMATDPVDPAQLADSARNAPLTRPRPGHADYAGMLKYGFDDARPVLERASARETAARVAAGTIARSFLRQALGVEVLSHVIAIGPSAPYEGPPPGPGDLPAIDASPVRAYDEAAEQAMIAEIEAAKKDGDTLGGVVEVVALGLPVGLGSFTSGDNRLDGQLAAAVMGIQAIKGVEIGDGFATARRRGSQAHDEMYPGPDGVVRSTNRAGGLEGGMTNGQPLRVRAAMKPISTVPRALATVDMATGDEAVAIHQRSDVCAVPAAGVVVEAMVALVLARAALQKFGGDSLAETRRNIDAYRRAVAEREAPAARGTA</sequence>
<reference key="1">
    <citation type="submission" date="2006-10" db="EMBL/GenBank/DDBJ databases">
        <authorList>
            <person name="Fleischmann R.D."/>
            <person name="Dodson R.J."/>
            <person name="Haft D.H."/>
            <person name="Merkel J.S."/>
            <person name="Nelson W.C."/>
            <person name="Fraser C.M."/>
        </authorList>
    </citation>
    <scope>NUCLEOTIDE SEQUENCE [LARGE SCALE GENOMIC DNA]</scope>
    <source>
        <strain>104</strain>
    </source>
</reference>
<dbReference type="EC" id="4.2.3.5" evidence="1"/>
<dbReference type="EMBL" id="CP000479">
    <property type="protein sequence ID" value="ABK66415.1"/>
    <property type="molecule type" value="Genomic_DNA"/>
</dbReference>
<dbReference type="RefSeq" id="WP_011725453.1">
    <property type="nucleotide sequence ID" value="NC_008595.1"/>
</dbReference>
<dbReference type="SMR" id="A0QI61"/>
<dbReference type="GeneID" id="75270814"/>
<dbReference type="KEGG" id="mav:MAV_3417"/>
<dbReference type="HOGENOM" id="CLU_034547_2_0_11"/>
<dbReference type="UniPathway" id="UPA00053">
    <property type="reaction ID" value="UER00090"/>
</dbReference>
<dbReference type="Proteomes" id="UP000001574">
    <property type="component" value="Chromosome"/>
</dbReference>
<dbReference type="GO" id="GO:0005829">
    <property type="term" value="C:cytosol"/>
    <property type="evidence" value="ECO:0007669"/>
    <property type="project" value="TreeGrafter"/>
</dbReference>
<dbReference type="GO" id="GO:0004107">
    <property type="term" value="F:chorismate synthase activity"/>
    <property type="evidence" value="ECO:0007669"/>
    <property type="project" value="UniProtKB-UniRule"/>
</dbReference>
<dbReference type="GO" id="GO:0010181">
    <property type="term" value="F:FMN binding"/>
    <property type="evidence" value="ECO:0007669"/>
    <property type="project" value="TreeGrafter"/>
</dbReference>
<dbReference type="GO" id="GO:0008652">
    <property type="term" value="P:amino acid biosynthetic process"/>
    <property type="evidence" value="ECO:0007669"/>
    <property type="project" value="UniProtKB-KW"/>
</dbReference>
<dbReference type="GO" id="GO:0009073">
    <property type="term" value="P:aromatic amino acid family biosynthetic process"/>
    <property type="evidence" value="ECO:0007669"/>
    <property type="project" value="UniProtKB-KW"/>
</dbReference>
<dbReference type="GO" id="GO:0009423">
    <property type="term" value="P:chorismate biosynthetic process"/>
    <property type="evidence" value="ECO:0007669"/>
    <property type="project" value="UniProtKB-UniRule"/>
</dbReference>
<dbReference type="CDD" id="cd07304">
    <property type="entry name" value="Chorismate_synthase"/>
    <property type="match status" value="1"/>
</dbReference>
<dbReference type="FunFam" id="3.60.150.10:FF:000002">
    <property type="entry name" value="Chorismate synthase"/>
    <property type="match status" value="1"/>
</dbReference>
<dbReference type="Gene3D" id="3.60.150.10">
    <property type="entry name" value="Chorismate synthase AroC"/>
    <property type="match status" value="1"/>
</dbReference>
<dbReference type="HAMAP" id="MF_00300">
    <property type="entry name" value="Chorismate_synth"/>
    <property type="match status" value="1"/>
</dbReference>
<dbReference type="InterPro" id="IPR000453">
    <property type="entry name" value="Chorismate_synth"/>
</dbReference>
<dbReference type="InterPro" id="IPR035904">
    <property type="entry name" value="Chorismate_synth_AroC_sf"/>
</dbReference>
<dbReference type="InterPro" id="IPR020541">
    <property type="entry name" value="Chorismate_synthase_CS"/>
</dbReference>
<dbReference type="NCBIfam" id="TIGR00033">
    <property type="entry name" value="aroC"/>
    <property type="match status" value="1"/>
</dbReference>
<dbReference type="NCBIfam" id="NF003793">
    <property type="entry name" value="PRK05382.1"/>
    <property type="match status" value="1"/>
</dbReference>
<dbReference type="PANTHER" id="PTHR21085">
    <property type="entry name" value="CHORISMATE SYNTHASE"/>
    <property type="match status" value="1"/>
</dbReference>
<dbReference type="PANTHER" id="PTHR21085:SF0">
    <property type="entry name" value="CHORISMATE SYNTHASE"/>
    <property type="match status" value="1"/>
</dbReference>
<dbReference type="Pfam" id="PF01264">
    <property type="entry name" value="Chorismate_synt"/>
    <property type="match status" value="1"/>
</dbReference>
<dbReference type="PIRSF" id="PIRSF001456">
    <property type="entry name" value="Chorismate_synth"/>
    <property type="match status" value="1"/>
</dbReference>
<dbReference type="SUPFAM" id="SSF103263">
    <property type="entry name" value="Chorismate synthase, AroC"/>
    <property type="match status" value="1"/>
</dbReference>
<dbReference type="PROSITE" id="PS00787">
    <property type="entry name" value="CHORISMATE_SYNTHASE_1"/>
    <property type="match status" value="1"/>
</dbReference>
<dbReference type="PROSITE" id="PS00788">
    <property type="entry name" value="CHORISMATE_SYNTHASE_2"/>
    <property type="match status" value="1"/>
</dbReference>
<dbReference type="PROSITE" id="PS00789">
    <property type="entry name" value="CHORISMATE_SYNTHASE_3"/>
    <property type="match status" value="1"/>
</dbReference>
<evidence type="ECO:0000255" key="1">
    <source>
        <dbReference type="HAMAP-Rule" id="MF_00300"/>
    </source>
</evidence>
<feature type="chain" id="PRO_0000322408" description="Chorismate synthase">
    <location>
        <begin position="1"/>
        <end position="401"/>
    </location>
</feature>
<feature type="binding site" evidence="1">
    <location>
        <position position="40"/>
    </location>
    <ligand>
        <name>NADP(+)</name>
        <dbReference type="ChEBI" id="CHEBI:58349"/>
    </ligand>
</feature>
<feature type="binding site" evidence="1">
    <location>
        <position position="46"/>
    </location>
    <ligand>
        <name>NADP(+)</name>
        <dbReference type="ChEBI" id="CHEBI:58349"/>
    </ligand>
</feature>
<feature type="binding site" evidence="1">
    <location>
        <begin position="135"/>
        <end position="137"/>
    </location>
    <ligand>
        <name>FMN</name>
        <dbReference type="ChEBI" id="CHEBI:58210"/>
    </ligand>
</feature>
<feature type="binding site" evidence="1">
    <location>
        <begin position="256"/>
        <end position="257"/>
    </location>
    <ligand>
        <name>FMN</name>
        <dbReference type="ChEBI" id="CHEBI:58210"/>
    </ligand>
</feature>
<feature type="binding site" evidence="1">
    <location>
        <position position="300"/>
    </location>
    <ligand>
        <name>FMN</name>
        <dbReference type="ChEBI" id="CHEBI:58210"/>
    </ligand>
</feature>
<feature type="binding site" evidence="1">
    <location>
        <begin position="315"/>
        <end position="319"/>
    </location>
    <ligand>
        <name>FMN</name>
        <dbReference type="ChEBI" id="CHEBI:58210"/>
    </ligand>
</feature>
<feature type="binding site" evidence="1">
    <location>
        <position position="341"/>
    </location>
    <ligand>
        <name>FMN</name>
        <dbReference type="ChEBI" id="CHEBI:58210"/>
    </ligand>
</feature>
<protein>
    <recommendedName>
        <fullName evidence="1">Chorismate synthase</fullName>
        <shortName evidence="1">CS</shortName>
        <ecNumber evidence="1">4.2.3.5</ecNumber>
    </recommendedName>
    <alternativeName>
        <fullName evidence="1">5-enolpyruvylshikimate-3-phosphate phospholyase</fullName>
    </alternativeName>
</protein>